<sequence>MKFAVIVFPGSNCDVDMFHAIKDELGEEVDYVWHDTENLDEYDAILLPGGFSYGDYLRCGAISRFANAMKAVQKAAEQGKPILGVCNGFQILVESGLLPGALMRNENLKFMCRTVQLRVENNETMFTSQYEKDEVINIPIAHGEGNYYCDEETLKQLEENNQIAFRYVENPNGSVSDIAGIVNEKGNVLGMMPHPERAVDELLGGAEGLKVFQSILKQWRETYVVNA</sequence>
<name>PURQ_BACC0</name>
<dbReference type="EC" id="6.3.5.3" evidence="1"/>
<dbReference type="EC" id="3.5.1.2" evidence="1"/>
<dbReference type="EMBL" id="CP001283">
    <property type="protein sequence ID" value="ACK88047.1"/>
    <property type="molecule type" value="Genomic_DNA"/>
</dbReference>
<dbReference type="RefSeq" id="WP_000666779.1">
    <property type="nucleotide sequence ID" value="NC_011773.1"/>
</dbReference>
<dbReference type="SMR" id="B7JM84"/>
<dbReference type="GeneID" id="69534103"/>
<dbReference type="KEGG" id="bcu:BCAH820_0325"/>
<dbReference type="HOGENOM" id="CLU_001031_3_1_9"/>
<dbReference type="UniPathway" id="UPA00074">
    <property type="reaction ID" value="UER00128"/>
</dbReference>
<dbReference type="Proteomes" id="UP000001363">
    <property type="component" value="Chromosome"/>
</dbReference>
<dbReference type="GO" id="GO:0005737">
    <property type="term" value="C:cytoplasm"/>
    <property type="evidence" value="ECO:0007669"/>
    <property type="project" value="UniProtKB-SubCell"/>
</dbReference>
<dbReference type="GO" id="GO:0005524">
    <property type="term" value="F:ATP binding"/>
    <property type="evidence" value="ECO:0007669"/>
    <property type="project" value="UniProtKB-KW"/>
</dbReference>
<dbReference type="GO" id="GO:0004359">
    <property type="term" value="F:glutaminase activity"/>
    <property type="evidence" value="ECO:0007669"/>
    <property type="project" value="UniProtKB-EC"/>
</dbReference>
<dbReference type="GO" id="GO:0004642">
    <property type="term" value="F:phosphoribosylformylglycinamidine synthase activity"/>
    <property type="evidence" value="ECO:0007669"/>
    <property type="project" value="UniProtKB-UniRule"/>
</dbReference>
<dbReference type="GO" id="GO:0006189">
    <property type="term" value="P:'de novo' IMP biosynthetic process"/>
    <property type="evidence" value="ECO:0007669"/>
    <property type="project" value="UniProtKB-UniRule"/>
</dbReference>
<dbReference type="CDD" id="cd01740">
    <property type="entry name" value="GATase1_FGAR_AT"/>
    <property type="match status" value="1"/>
</dbReference>
<dbReference type="FunFam" id="3.40.50.880:FF:000019">
    <property type="entry name" value="Phosphoribosylformylglycinamidine synthase subunit PurQ"/>
    <property type="match status" value="1"/>
</dbReference>
<dbReference type="Gene3D" id="3.40.50.880">
    <property type="match status" value="1"/>
</dbReference>
<dbReference type="HAMAP" id="MF_00421">
    <property type="entry name" value="PurQ"/>
    <property type="match status" value="1"/>
</dbReference>
<dbReference type="InterPro" id="IPR029062">
    <property type="entry name" value="Class_I_gatase-like"/>
</dbReference>
<dbReference type="InterPro" id="IPR010075">
    <property type="entry name" value="PRibForGlyAmidine_synth_PurQ"/>
</dbReference>
<dbReference type="NCBIfam" id="TIGR01737">
    <property type="entry name" value="FGAM_synth_I"/>
    <property type="match status" value="1"/>
</dbReference>
<dbReference type="NCBIfam" id="NF002957">
    <property type="entry name" value="PRK03619.1"/>
    <property type="match status" value="1"/>
</dbReference>
<dbReference type="PANTHER" id="PTHR47552">
    <property type="entry name" value="PHOSPHORIBOSYLFORMYLGLYCINAMIDINE SYNTHASE SUBUNIT PURQ"/>
    <property type="match status" value="1"/>
</dbReference>
<dbReference type="PANTHER" id="PTHR47552:SF1">
    <property type="entry name" value="PHOSPHORIBOSYLFORMYLGLYCINAMIDINE SYNTHASE SUBUNIT PURQ"/>
    <property type="match status" value="1"/>
</dbReference>
<dbReference type="Pfam" id="PF13507">
    <property type="entry name" value="GATase_5"/>
    <property type="match status" value="1"/>
</dbReference>
<dbReference type="PIRSF" id="PIRSF001586">
    <property type="entry name" value="FGAM_synth_I"/>
    <property type="match status" value="1"/>
</dbReference>
<dbReference type="SMART" id="SM01211">
    <property type="entry name" value="GATase_5"/>
    <property type="match status" value="1"/>
</dbReference>
<dbReference type="SUPFAM" id="SSF52317">
    <property type="entry name" value="Class I glutamine amidotransferase-like"/>
    <property type="match status" value="1"/>
</dbReference>
<dbReference type="PROSITE" id="PS51273">
    <property type="entry name" value="GATASE_TYPE_1"/>
    <property type="match status" value="1"/>
</dbReference>
<evidence type="ECO:0000255" key="1">
    <source>
        <dbReference type="HAMAP-Rule" id="MF_00421"/>
    </source>
</evidence>
<feature type="chain" id="PRO_1000194845" description="Phosphoribosylformylglycinamidine synthase subunit PurQ">
    <location>
        <begin position="1"/>
        <end position="227"/>
    </location>
</feature>
<feature type="domain" description="Glutamine amidotransferase type-1" evidence="1">
    <location>
        <begin position="3"/>
        <end position="225"/>
    </location>
</feature>
<feature type="active site" description="Nucleophile" evidence="1">
    <location>
        <position position="86"/>
    </location>
</feature>
<feature type="active site" evidence="1">
    <location>
        <position position="194"/>
    </location>
</feature>
<feature type="active site" evidence="1">
    <location>
        <position position="196"/>
    </location>
</feature>
<keyword id="KW-0067">ATP-binding</keyword>
<keyword id="KW-0963">Cytoplasm</keyword>
<keyword id="KW-0315">Glutamine amidotransferase</keyword>
<keyword id="KW-0378">Hydrolase</keyword>
<keyword id="KW-0436">Ligase</keyword>
<keyword id="KW-0547">Nucleotide-binding</keyword>
<keyword id="KW-0658">Purine biosynthesis</keyword>
<protein>
    <recommendedName>
        <fullName evidence="1">Phosphoribosylformylglycinamidine synthase subunit PurQ</fullName>
        <shortName evidence="1">FGAM synthase</shortName>
        <ecNumber evidence="1">6.3.5.3</ecNumber>
    </recommendedName>
    <alternativeName>
        <fullName evidence="1">Formylglycinamide ribonucleotide amidotransferase subunit I</fullName>
        <shortName evidence="1">FGAR amidotransferase I</shortName>
        <shortName evidence="1">FGAR-AT I</shortName>
    </alternativeName>
    <alternativeName>
        <fullName evidence="1">Glutaminase PurQ</fullName>
        <ecNumber evidence="1">3.5.1.2</ecNumber>
    </alternativeName>
    <alternativeName>
        <fullName evidence="1">Phosphoribosylformylglycinamidine synthase subunit I</fullName>
    </alternativeName>
</protein>
<comment type="function">
    <text evidence="1">Part of the phosphoribosylformylglycinamidine synthase complex involved in the purines biosynthetic pathway. Catalyzes the ATP-dependent conversion of formylglycinamide ribonucleotide (FGAR) and glutamine to yield formylglycinamidine ribonucleotide (FGAM) and glutamate. The FGAM synthase complex is composed of three subunits. PurQ produces an ammonia molecule by converting glutamine to glutamate. PurL transfers the ammonia molecule to FGAR to form FGAM in an ATP-dependent manner. PurS interacts with PurQ and PurL and is thought to assist in the transfer of the ammonia molecule from PurQ to PurL.</text>
</comment>
<comment type="catalytic activity">
    <reaction evidence="1">
        <text>N(2)-formyl-N(1)-(5-phospho-beta-D-ribosyl)glycinamide + L-glutamine + ATP + H2O = 2-formamido-N(1)-(5-O-phospho-beta-D-ribosyl)acetamidine + L-glutamate + ADP + phosphate + H(+)</text>
        <dbReference type="Rhea" id="RHEA:17129"/>
        <dbReference type="ChEBI" id="CHEBI:15377"/>
        <dbReference type="ChEBI" id="CHEBI:15378"/>
        <dbReference type="ChEBI" id="CHEBI:29985"/>
        <dbReference type="ChEBI" id="CHEBI:30616"/>
        <dbReference type="ChEBI" id="CHEBI:43474"/>
        <dbReference type="ChEBI" id="CHEBI:58359"/>
        <dbReference type="ChEBI" id="CHEBI:147286"/>
        <dbReference type="ChEBI" id="CHEBI:147287"/>
        <dbReference type="ChEBI" id="CHEBI:456216"/>
        <dbReference type="EC" id="6.3.5.3"/>
    </reaction>
</comment>
<comment type="catalytic activity">
    <reaction evidence="1">
        <text>L-glutamine + H2O = L-glutamate + NH4(+)</text>
        <dbReference type="Rhea" id="RHEA:15889"/>
        <dbReference type="ChEBI" id="CHEBI:15377"/>
        <dbReference type="ChEBI" id="CHEBI:28938"/>
        <dbReference type="ChEBI" id="CHEBI:29985"/>
        <dbReference type="ChEBI" id="CHEBI:58359"/>
        <dbReference type="EC" id="3.5.1.2"/>
    </reaction>
</comment>
<comment type="pathway">
    <text evidence="1">Purine metabolism; IMP biosynthesis via de novo pathway; 5-amino-1-(5-phospho-D-ribosyl)imidazole from N(2)-formyl-N(1)-(5-phospho-D-ribosyl)glycinamide: step 1/2.</text>
</comment>
<comment type="subunit">
    <text evidence="1">Part of the FGAM synthase complex composed of 1 PurL, 1 PurQ and 2 PurS subunits.</text>
</comment>
<comment type="subcellular location">
    <subcellularLocation>
        <location evidence="1">Cytoplasm</location>
    </subcellularLocation>
</comment>
<reference key="1">
    <citation type="submission" date="2008-10" db="EMBL/GenBank/DDBJ databases">
        <title>Genome sequence of Bacillus cereus AH820.</title>
        <authorList>
            <person name="Dodson R.J."/>
            <person name="Durkin A.S."/>
            <person name="Rosovitz M.J."/>
            <person name="Rasko D.A."/>
            <person name="Hoffmaster A."/>
            <person name="Ravel J."/>
            <person name="Sutton G."/>
        </authorList>
    </citation>
    <scope>NUCLEOTIDE SEQUENCE [LARGE SCALE GENOMIC DNA]</scope>
    <source>
        <strain>AH820</strain>
    </source>
</reference>
<gene>
    <name evidence="1" type="primary">purQ</name>
    <name type="ordered locus">BCAH820_0325</name>
</gene>
<proteinExistence type="inferred from homology"/>
<organism>
    <name type="scientific">Bacillus cereus (strain AH820)</name>
    <dbReference type="NCBI Taxonomy" id="405535"/>
    <lineage>
        <taxon>Bacteria</taxon>
        <taxon>Bacillati</taxon>
        <taxon>Bacillota</taxon>
        <taxon>Bacilli</taxon>
        <taxon>Bacillales</taxon>
        <taxon>Bacillaceae</taxon>
        <taxon>Bacillus</taxon>
        <taxon>Bacillus cereus group</taxon>
    </lineage>
</organism>
<accession>B7JM84</accession>